<comment type="function">
    <text evidence="1">Required for maturation of 30S ribosomal subunits.</text>
</comment>
<comment type="subcellular location">
    <subcellularLocation>
        <location evidence="1">Cytoplasm</location>
    </subcellularLocation>
</comment>
<comment type="similarity">
    <text evidence="1">Belongs to the RimP family.</text>
</comment>
<sequence>MATLEQKLEELVSDTIESMGFELVGIECQRAGRFLTVRLYIDKEGGVTIDDCSDVSRQVSAILDVEDPIADKYNLEVSSPGLDRPLFTLAHYQRFIGQEIVIHLRIPMFDRRKWQGKLESVEGDLITLTVDNETRQFAFGNIQKANLVPVFNF</sequence>
<evidence type="ECO:0000255" key="1">
    <source>
        <dbReference type="HAMAP-Rule" id="MF_01077"/>
    </source>
</evidence>
<accession>A3N003</accession>
<reference key="1">
    <citation type="journal article" date="2008" name="J. Bacteriol.">
        <title>The complete genome sequence of Actinobacillus pleuropneumoniae L20 (serotype 5b).</title>
        <authorList>
            <person name="Foote S.J."/>
            <person name="Bosse J.T."/>
            <person name="Bouevitch A.B."/>
            <person name="Langford P.R."/>
            <person name="Young N.M."/>
            <person name="Nash J.H.E."/>
        </authorList>
    </citation>
    <scope>NUCLEOTIDE SEQUENCE [LARGE SCALE GENOMIC DNA]</scope>
    <source>
        <strain>L20</strain>
    </source>
</reference>
<name>RIMP_ACTP2</name>
<dbReference type="EMBL" id="CP000569">
    <property type="protein sequence ID" value="ABN73739.1"/>
    <property type="molecule type" value="Genomic_DNA"/>
</dbReference>
<dbReference type="RefSeq" id="WP_005604037.1">
    <property type="nucleotide sequence ID" value="NC_009053.1"/>
</dbReference>
<dbReference type="SMR" id="A3N003"/>
<dbReference type="STRING" id="416269.APL_0637"/>
<dbReference type="EnsemblBacteria" id="ABN73739">
    <property type="protein sequence ID" value="ABN73739"/>
    <property type="gene ID" value="APL_0637"/>
</dbReference>
<dbReference type="KEGG" id="apl:APL_0637"/>
<dbReference type="eggNOG" id="COG0779">
    <property type="taxonomic scope" value="Bacteria"/>
</dbReference>
<dbReference type="HOGENOM" id="CLU_070525_1_1_6"/>
<dbReference type="Proteomes" id="UP000001432">
    <property type="component" value="Chromosome"/>
</dbReference>
<dbReference type="GO" id="GO:0005829">
    <property type="term" value="C:cytosol"/>
    <property type="evidence" value="ECO:0007669"/>
    <property type="project" value="TreeGrafter"/>
</dbReference>
<dbReference type="GO" id="GO:0000028">
    <property type="term" value="P:ribosomal small subunit assembly"/>
    <property type="evidence" value="ECO:0007669"/>
    <property type="project" value="TreeGrafter"/>
</dbReference>
<dbReference type="GO" id="GO:0006412">
    <property type="term" value="P:translation"/>
    <property type="evidence" value="ECO:0007669"/>
    <property type="project" value="TreeGrafter"/>
</dbReference>
<dbReference type="CDD" id="cd01734">
    <property type="entry name" value="YlxS_C"/>
    <property type="match status" value="1"/>
</dbReference>
<dbReference type="FunFam" id="3.30.300.70:FF:000001">
    <property type="entry name" value="Ribosome maturation factor RimP"/>
    <property type="match status" value="1"/>
</dbReference>
<dbReference type="Gene3D" id="2.30.30.180">
    <property type="entry name" value="Ribosome maturation factor RimP, C-terminal domain"/>
    <property type="match status" value="1"/>
</dbReference>
<dbReference type="Gene3D" id="3.30.300.70">
    <property type="entry name" value="RimP-like superfamily, N-terminal"/>
    <property type="match status" value="1"/>
</dbReference>
<dbReference type="HAMAP" id="MF_01077">
    <property type="entry name" value="RimP"/>
    <property type="match status" value="1"/>
</dbReference>
<dbReference type="InterPro" id="IPR003728">
    <property type="entry name" value="Ribosome_maturation_RimP"/>
</dbReference>
<dbReference type="InterPro" id="IPR028998">
    <property type="entry name" value="RimP_C"/>
</dbReference>
<dbReference type="InterPro" id="IPR036847">
    <property type="entry name" value="RimP_C_sf"/>
</dbReference>
<dbReference type="InterPro" id="IPR028989">
    <property type="entry name" value="RimP_N"/>
</dbReference>
<dbReference type="InterPro" id="IPR035956">
    <property type="entry name" value="RimP_N_sf"/>
</dbReference>
<dbReference type="NCBIfam" id="NF000927">
    <property type="entry name" value="PRK00092.1-1"/>
    <property type="match status" value="1"/>
</dbReference>
<dbReference type="PANTHER" id="PTHR33867">
    <property type="entry name" value="RIBOSOME MATURATION FACTOR RIMP"/>
    <property type="match status" value="1"/>
</dbReference>
<dbReference type="PANTHER" id="PTHR33867:SF1">
    <property type="entry name" value="RIBOSOME MATURATION FACTOR RIMP"/>
    <property type="match status" value="1"/>
</dbReference>
<dbReference type="Pfam" id="PF17384">
    <property type="entry name" value="DUF150_C"/>
    <property type="match status" value="1"/>
</dbReference>
<dbReference type="Pfam" id="PF02576">
    <property type="entry name" value="RimP_N"/>
    <property type="match status" value="1"/>
</dbReference>
<dbReference type="SUPFAM" id="SSF74942">
    <property type="entry name" value="YhbC-like, C-terminal domain"/>
    <property type="match status" value="1"/>
</dbReference>
<dbReference type="SUPFAM" id="SSF75420">
    <property type="entry name" value="YhbC-like, N-terminal domain"/>
    <property type="match status" value="1"/>
</dbReference>
<gene>
    <name evidence="1" type="primary">rimP</name>
    <name type="ordered locus">APL_0637</name>
</gene>
<proteinExistence type="inferred from homology"/>
<protein>
    <recommendedName>
        <fullName evidence="1">Ribosome maturation factor RimP</fullName>
    </recommendedName>
</protein>
<organism>
    <name type="scientific">Actinobacillus pleuropneumoniae serotype 5b (strain L20)</name>
    <dbReference type="NCBI Taxonomy" id="416269"/>
    <lineage>
        <taxon>Bacteria</taxon>
        <taxon>Pseudomonadati</taxon>
        <taxon>Pseudomonadota</taxon>
        <taxon>Gammaproteobacteria</taxon>
        <taxon>Pasteurellales</taxon>
        <taxon>Pasteurellaceae</taxon>
        <taxon>Actinobacillus</taxon>
    </lineage>
</organism>
<feature type="chain" id="PRO_1000064679" description="Ribosome maturation factor RimP">
    <location>
        <begin position="1"/>
        <end position="153"/>
    </location>
</feature>
<keyword id="KW-0963">Cytoplasm</keyword>
<keyword id="KW-1185">Reference proteome</keyword>
<keyword id="KW-0690">Ribosome biogenesis</keyword>